<protein>
    <recommendedName>
        <fullName>B-cell CLL/lymphoma 7 protein family member C</fullName>
    </recommendedName>
    <alternativeName>
        <fullName>B-cell chronic lymphocytic leukemia/lymphoma 7C protein</fullName>
    </alternativeName>
</protein>
<accession>O08664</accession>
<accession>Q99LS2</accession>
<dbReference type="EMBL" id="Y11905">
    <property type="protein sequence ID" value="CAA72656.1"/>
    <property type="molecule type" value="mRNA"/>
</dbReference>
<dbReference type="EMBL" id="AK131935">
    <property type="protein sequence ID" value="BAE20884.1"/>
    <property type="molecule type" value="mRNA"/>
</dbReference>
<dbReference type="EMBL" id="BC002252">
    <property type="protein sequence ID" value="AAH02252.1"/>
    <property type="molecule type" value="mRNA"/>
</dbReference>
<dbReference type="EMBL" id="BC005673">
    <property type="protein sequence ID" value="AAH05673.1"/>
    <property type="molecule type" value="mRNA"/>
</dbReference>
<dbReference type="EMBL" id="BC058530">
    <property type="protein sequence ID" value="AAH58530.1"/>
    <property type="molecule type" value="mRNA"/>
</dbReference>
<dbReference type="CCDS" id="CCDS21874.1"/>
<dbReference type="RefSeq" id="NP_033876.1">
    <property type="nucleotide sequence ID" value="NM_009746.2"/>
</dbReference>
<dbReference type="BioGRID" id="198329">
    <property type="interactions" value="22"/>
</dbReference>
<dbReference type="ComplexPortal" id="CPX-1251">
    <property type="entry name" value="Embryonic stem cell-specific SWI/SNF ATP-dependent chromatin remodeling complex"/>
</dbReference>
<dbReference type="ComplexPortal" id="CPX-4202">
    <property type="entry name" value="GBAF (SWI/SNF) ATP-dependent chromatin remodeling complex, ACTL6A-BICRA-SMARCA2 variant"/>
</dbReference>
<dbReference type="ComplexPortal" id="CPX-4204">
    <property type="entry name" value="GBAF (SWI/SNF) ATP-dependent chromatin remodeling complex, ACTL6A-BICRAL-SMARCA2 variant"/>
</dbReference>
<dbReference type="ComplexPortal" id="CPX-4221">
    <property type="entry name" value="GBAF (SWI/SNF) ATP-dependent chromatin remodeling complex, ACTL6A-BICRA-SMARCA4 variant"/>
</dbReference>
<dbReference type="ComplexPortal" id="CPX-4222">
    <property type="entry name" value="GBAF (SWI/SNF) ATP-dependent chromatin remodeling complex, ACTL6A-BICRAL-SMARCA4 variant"/>
</dbReference>
<dbReference type="ComplexPortal" id="CPX-4227">
    <property type="entry name" value="GBAF (SWI/SNF) ATP-dependent chromatin remodeling complex, ACTL6B-BICRA-SMARCA2 variant"/>
</dbReference>
<dbReference type="ComplexPortal" id="CPX-4228">
    <property type="entry name" value="GBAF (SWI/SNF) ATP-dependent chromatin remodeling complex, ACTL6B-BICRAL-SMARCA2 variant"/>
</dbReference>
<dbReference type="ComplexPortal" id="CPX-4229">
    <property type="entry name" value="GBAF (SWI/SNF) ATP-dependent chromatin remodeling complex, ACTL6B-BICRA-SMARCA4 variant"/>
</dbReference>
<dbReference type="ComplexPortal" id="CPX-4230">
    <property type="entry name" value="GBAF (SWI/SNF) ATP-dependent chromatin remodeling complex, ACTL6B-BICRAL-SMARCA4 variant"/>
</dbReference>
<dbReference type="FunCoup" id="O08664">
    <property type="interactions" value="1158"/>
</dbReference>
<dbReference type="IntAct" id="O08664">
    <property type="interactions" value="19"/>
</dbReference>
<dbReference type="STRING" id="10090.ENSMUSP00000145743"/>
<dbReference type="GlyGen" id="O08664">
    <property type="glycosylation" value="1 site"/>
</dbReference>
<dbReference type="iPTMnet" id="O08664"/>
<dbReference type="PhosphoSitePlus" id="O08664"/>
<dbReference type="jPOST" id="O08664"/>
<dbReference type="PaxDb" id="10090-ENSMUSP00000057937"/>
<dbReference type="PeptideAtlas" id="O08664"/>
<dbReference type="ProteomicsDB" id="273661"/>
<dbReference type="Pumba" id="O08664"/>
<dbReference type="Antibodypedia" id="13852">
    <property type="antibodies" value="186 antibodies from 26 providers"/>
</dbReference>
<dbReference type="DNASU" id="12055"/>
<dbReference type="Ensembl" id="ENSMUST00000061468.9">
    <property type="protein sequence ID" value="ENSMUSP00000057937.9"/>
    <property type="gene ID" value="ENSMUSG00000030814.18"/>
</dbReference>
<dbReference type="GeneID" id="12055"/>
<dbReference type="KEGG" id="mmu:12055"/>
<dbReference type="UCSC" id="uc009jwl.1">
    <property type="organism name" value="mouse"/>
</dbReference>
<dbReference type="AGR" id="MGI:1332237"/>
<dbReference type="CTD" id="9274"/>
<dbReference type="MGI" id="MGI:1332237">
    <property type="gene designation" value="Bcl7c"/>
</dbReference>
<dbReference type="VEuPathDB" id="HostDB:ENSMUSG00000030814"/>
<dbReference type="eggNOG" id="KOG4095">
    <property type="taxonomic scope" value="Eukaryota"/>
</dbReference>
<dbReference type="GeneTree" id="ENSGT00390000002172"/>
<dbReference type="HOGENOM" id="CLU_110835_1_1_1"/>
<dbReference type="InParanoid" id="O08664"/>
<dbReference type="OMA" id="PMLGQEG"/>
<dbReference type="OrthoDB" id="5989898at2759"/>
<dbReference type="PhylomeDB" id="O08664"/>
<dbReference type="TreeFam" id="TF317441"/>
<dbReference type="BioGRID-ORCS" id="12055">
    <property type="hits" value="4 hits in 75 CRISPR screens"/>
</dbReference>
<dbReference type="ChiTaRS" id="Bcl7c">
    <property type="organism name" value="mouse"/>
</dbReference>
<dbReference type="PRO" id="PR:O08664"/>
<dbReference type="Proteomes" id="UP000000589">
    <property type="component" value="Chromosome 7"/>
</dbReference>
<dbReference type="RNAct" id="O08664">
    <property type="molecule type" value="protein"/>
</dbReference>
<dbReference type="Bgee" id="ENSMUSG00000030814">
    <property type="expression patterns" value="Expressed in embryonic brain and 218 other cell types or tissues"/>
</dbReference>
<dbReference type="ExpressionAtlas" id="O08664">
    <property type="expression patterns" value="baseline and differential"/>
</dbReference>
<dbReference type="GO" id="GO:0000785">
    <property type="term" value="C:chromatin"/>
    <property type="evidence" value="ECO:0000303"/>
    <property type="project" value="ComplexPortal"/>
</dbReference>
<dbReference type="GO" id="GO:0140288">
    <property type="term" value="C:GBAF complex"/>
    <property type="evidence" value="ECO:0000303"/>
    <property type="project" value="ComplexPortal"/>
</dbReference>
<dbReference type="GO" id="GO:0005654">
    <property type="term" value="C:nucleoplasm"/>
    <property type="evidence" value="ECO:0000304"/>
    <property type="project" value="Reactome"/>
</dbReference>
<dbReference type="GO" id="GO:0016514">
    <property type="term" value="C:SWI/SNF complex"/>
    <property type="evidence" value="ECO:0000314"/>
    <property type="project" value="UniProtKB"/>
</dbReference>
<dbReference type="GO" id="GO:0006915">
    <property type="term" value="P:apoptotic process"/>
    <property type="evidence" value="ECO:0007669"/>
    <property type="project" value="UniProtKB-KW"/>
</dbReference>
<dbReference type="GO" id="GO:0006338">
    <property type="term" value="P:chromatin remodeling"/>
    <property type="evidence" value="ECO:0000303"/>
    <property type="project" value="ComplexPortal"/>
</dbReference>
<dbReference type="GO" id="GO:0045596">
    <property type="term" value="P:negative regulation of cell differentiation"/>
    <property type="evidence" value="ECO:0000303"/>
    <property type="project" value="ComplexPortal"/>
</dbReference>
<dbReference type="GO" id="GO:0008284">
    <property type="term" value="P:positive regulation of cell population proliferation"/>
    <property type="evidence" value="ECO:0000303"/>
    <property type="project" value="ComplexPortal"/>
</dbReference>
<dbReference type="GO" id="GO:2000781">
    <property type="term" value="P:positive regulation of double-strand break repair"/>
    <property type="evidence" value="ECO:0000303"/>
    <property type="project" value="ComplexPortal"/>
</dbReference>
<dbReference type="GO" id="GO:1902459">
    <property type="term" value="P:positive regulation of stem cell population maintenance"/>
    <property type="evidence" value="ECO:0000303"/>
    <property type="project" value="ComplexPortal"/>
</dbReference>
<dbReference type="GO" id="GO:0070316">
    <property type="term" value="P:regulation of G0 to G1 transition"/>
    <property type="evidence" value="ECO:0000303"/>
    <property type="project" value="ComplexPortal"/>
</dbReference>
<dbReference type="GO" id="GO:2000045">
    <property type="term" value="P:regulation of G1/S transition of mitotic cell cycle"/>
    <property type="evidence" value="ECO:0000303"/>
    <property type="project" value="ComplexPortal"/>
</dbReference>
<dbReference type="GO" id="GO:0030071">
    <property type="term" value="P:regulation of mitotic metaphase/anaphase transition"/>
    <property type="evidence" value="ECO:0000303"/>
    <property type="project" value="ComplexPortal"/>
</dbReference>
<dbReference type="GO" id="GO:2000819">
    <property type="term" value="P:regulation of nucleotide-excision repair"/>
    <property type="evidence" value="ECO:0000303"/>
    <property type="project" value="ComplexPortal"/>
</dbReference>
<dbReference type="GO" id="GO:0006357">
    <property type="term" value="P:regulation of transcription by RNA polymerase II"/>
    <property type="evidence" value="ECO:0000303"/>
    <property type="project" value="ComplexPortal"/>
</dbReference>
<dbReference type="InterPro" id="IPR006804">
    <property type="entry name" value="BCL7"/>
</dbReference>
<dbReference type="PANTHER" id="PTHR12767:SF10">
    <property type="entry name" value="B-CELL CLL_LYMPHOMA 7 PROTEIN FAMILY MEMBER C"/>
    <property type="match status" value="1"/>
</dbReference>
<dbReference type="PANTHER" id="PTHR12767">
    <property type="entry name" value="BCL7 RELATED"/>
    <property type="match status" value="1"/>
</dbReference>
<dbReference type="Pfam" id="PF04714">
    <property type="entry name" value="BCL_N"/>
    <property type="match status" value="1"/>
</dbReference>
<organism>
    <name type="scientific">Mus musculus</name>
    <name type="common">Mouse</name>
    <dbReference type="NCBI Taxonomy" id="10090"/>
    <lineage>
        <taxon>Eukaryota</taxon>
        <taxon>Metazoa</taxon>
        <taxon>Chordata</taxon>
        <taxon>Craniata</taxon>
        <taxon>Vertebrata</taxon>
        <taxon>Euteleostomi</taxon>
        <taxon>Mammalia</taxon>
        <taxon>Eutheria</taxon>
        <taxon>Euarchontoglires</taxon>
        <taxon>Glires</taxon>
        <taxon>Rodentia</taxon>
        <taxon>Myomorpha</taxon>
        <taxon>Muroidea</taxon>
        <taxon>Muridae</taxon>
        <taxon>Murinae</taxon>
        <taxon>Mus</taxon>
        <taxon>Mus</taxon>
    </lineage>
</organism>
<sequence length="217" mass="23445">MAGRTVRAETRSRAKDDIKKVMATIEKVRRWEKRWVTVGDTSLRIFKWVPVVDPQEEERRRAGGGAERSRGRERRGRGTSPRGGGPLILLDLNDENSNQSFHSEGSLQKGAEPSPGGTPQPSRPGSPTGPPEVITEDTQPPQLGQERDPGGTPAGGTDEPPKLTKEEPVPELLEAEAPEAYPVFEPVPSVPEAAQGDTEDSEGAPPLKRICPNAPDP</sequence>
<name>BCL7C_MOUSE</name>
<feature type="chain" id="PRO_0000239834" description="B-cell CLL/lymphoma 7 protein family member C">
    <location>
        <begin position="1"/>
        <end position="217"/>
    </location>
</feature>
<feature type="region of interest" description="Disordered" evidence="1">
    <location>
        <begin position="49"/>
        <end position="217"/>
    </location>
</feature>
<feature type="compositionally biased region" description="Polar residues" evidence="1">
    <location>
        <begin position="95"/>
        <end position="106"/>
    </location>
</feature>
<feature type="compositionally biased region" description="Pro residues" evidence="1">
    <location>
        <begin position="116"/>
        <end position="130"/>
    </location>
</feature>
<feature type="compositionally biased region" description="Basic and acidic residues" evidence="1">
    <location>
        <begin position="159"/>
        <end position="168"/>
    </location>
</feature>
<feature type="modified residue" description="Phosphoserine" evidence="5">
    <location>
        <position position="97"/>
    </location>
</feature>
<feature type="modified residue" description="Phosphoserine" evidence="5">
    <location>
        <position position="100"/>
    </location>
</feature>
<feature type="modified residue" description="Phosphoserine" evidence="5">
    <location>
        <position position="103"/>
    </location>
</feature>
<feature type="modified residue" description="Phosphoserine" evidence="4 5">
    <location>
        <position position="114"/>
    </location>
</feature>
<feature type="modified residue" description="Phosphothreonine" evidence="5">
    <location>
        <position position="118"/>
    </location>
</feature>
<feature type="modified residue" description="Phosphoserine" evidence="5">
    <location>
        <position position="122"/>
    </location>
</feature>
<feature type="modified residue" description="Phosphoserine" evidence="5">
    <location>
        <position position="126"/>
    </location>
</feature>
<evidence type="ECO:0000256" key="1">
    <source>
        <dbReference type="SAM" id="MobiDB-lite"/>
    </source>
</evidence>
<evidence type="ECO:0000269" key="2">
    <source>
    </source>
</evidence>
<evidence type="ECO:0000305" key="3"/>
<evidence type="ECO:0007744" key="4">
    <source>
    </source>
</evidence>
<evidence type="ECO:0007744" key="5">
    <source>
    </source>
</evidence>
<comment type="function">
    <text evidence="2">May play an anti-apoptotic role.</text>
</comment>
<comment type="induction">
    <text evidence="2">Down-regulated by IL-10 in a malignant cell line derived from a murine model for chronic lymphocytic leukemia.</text>
</comment>
<comment type="similarity">
    <text evidence="3">Belongs to the BCL7 family.</text>
</comment>
<keyword id="KW-0053">Apoptosis</keyword>
<keyword id="KW-0597">Phosphoprotein</keyword>
<keyword id="KW-1185">Reference proteome</keyword>
<proteinExistence type="evidence at protein level"/>
<reference key="1">
    <citation type="journal article" date="1998" name="Gene">
        <title>The BCL7 gene family: deletion of BCL7B in Williams syndrome.</title>
        <authorList>
            <person name="Jadayel D.M."/>
            <person name="Osborne L.R."/>
            <person name="Coignet L.J.A."/>
            <person name="Zani V.J."/>
            <person name="Tsui L.-C."/>
            <person name="Scherer S.W."/>
            <person name="Dyer M.J.S."/>
        </authorList>
    </citation>
    <scope>NUCLEOTIDE SEQUENCE [MRNA]</scope>
    <source>
        <strain>C57BL/6J</strain>
        <tissue>Placenta</tissue>
    </source>
</reference>
<reference key="2">
    <citation type="journal article" date="2005" name="Science">
        <title>The transcriptional landscape of the mammalian genome.</title>
        <authorList>
            <person name="Carninci P."/>
            <person name="Kasukawa T."/>
            <person name="Katayama S."/>
            <person name="Gough J."/>
            <person name="Frith M.C."/>
            <person name="Maeda N."/>
            <person name="Oyama R."/>
            <person name="Ravasi T."/>
            <person name="Lenhard B."/>
            <person name="Wells C."/>
            <person name="Kodzius R."/>
            <person name="Shimokawa K."/>
            <person name="Bajic V.B."/>
            <person name="Brenner S.E."/>
            <person name="Batalov S."/>
            <person name="Forrest A.R."/>
            <person name="Zavolan M."/>
            <person name="Davis M.J."/>
            <person name="Wilming L.G."/>
            <person name="Aidinis V."/>
            <person name="Allen J.E."/>
            <person name="Ambesi-Impiombato A."/>
            <person name="Apweiler R."/>
            <person name="Aturaliya R.N."/>
            <person name="Bailey T.L."/>
            <person name="Bansal M."/>
            <person name="Baxter L."/>
            <person name="Beisel K.W."/>
            <person name="Bersano T."/>
            <person name="Bono H."/>
            <person name="Chalk A.M."/>
            <person name="Chiu K.P."/>
            <person name="Choudhary V."/>
            <person name="Christoffels A."/>
            <person name="Clutterbuck D.R."/>
            <person name="Crowe M.L."/>
            <person name="Dalla E."/>
            <person name="Dalrymple B.P."/>
            <person name="de Bono B."/>
            <person name="Della Gatta G."/>
            <person name="di Bernardo D."/>
            <person name="Down T."/>
            <person name="Engstrom P."/>
            <person name="Fagiolini M."/>
            <person name="Faulkner G."/>
            <person name="Fletcher C.F."/>
            <person name="Fukushima T."/>
            <person name="Furuno M."/>
            <person name="Futaki S."/>
            <person name="Gariboldi M."/>
            <person name="Georgii-Hemming P."/>
            <person name="Gingeras T.R."/>
            <person name="Gojobori T."/>
            <person name="Green R.E."/>
            <person name="Gustincich S."/>
            <person name="Harbers M."/>
            <person name="Hayashi Y."/>
            <person name="Hensch T.K."/>
            <person name="Hirokawa N."/>
            <person name="Hill D."/>
            <person name="Huminiecki L."/>
            <person name="Iacono M."/>
            <person name="Ikeo K."/>
            <person name="Iwama A."/>
            <person name="Ishikawa T."/>
            <person name="Jakt M."/>
            <person name="Kanapin A."/>
            <person name="Katoh M."/>
            <person name="Kawasawa Y."/>
            <person name="Kelso J."/>
            <person name="Kitamura H."/>
            <person name="Kitano H."/>
            <person name="Kollias G."/>
            <person name="Krishnan S.P."/>
            <person name="Kruger A."/>
            <person name="Kummerfeld S.K."/>
            <person name="Kurochkin I.V."/>
            <person name="Lareau L.F."/>
            <person name="Lazarevic D."/>
            <person name="Lipovich L."/>
            <person name="Liu J."/>
            <person name="Liuni S."/>
            <person name="McWilliam S."/>
            <person name="Madan Babu M."/>
            <person name="Madera M."/>
            <person name="Marchionni L."/>
            <person name="Matsuda H."/>
            <person name="Matsuzawa S."/>
            <person name="Miki H."/>
            <person name="Mignone F."/>
            <person name="Miyake S."/>
            <person name="Morris K."/>
            <person name="Mottagui-Tabar S."/>
            <person name="Mulder N."/>
            <person name="Nakano N."/>
            <person name="Nakauchi H."/>
            <person name="Ng P."/>
            <person name="Nilsson R."/>
            <person name="Nishiguchi S."/>
            <person name="Nishikawa S."/>
            <person name="Nori F."/>
            <person name="Ohara O."/>
            <person name="Okazaki Y."/>
            <person name="Orlando V."/>
            <person name="Pang K.C."/>
            <person name="Pavan W.J."/>
            <person name="Pavesi G."/>
            <person name="Pesole G."/>
            <person name="Petrovsky N."/>
            <person name="Piazza S."/>
            <person name="Reed J."/>
            <person name="Reid J.F."/>
            <person name="Ring B.Z."/>
            <person name="Ringwald M."/>
            <person name="Rost B."/>
            <person name="Ruan Y."/>
            <person name="Salzberg S.L."/>
            <person name="Sandelin A."/>
            <person name="Schneider C."/>
            <person name="Schoenbach C."/>
            <person name="Sekiguchi K."/>
            <person name="Semple C.A."/>
            <person name="Seno S."/>
            <person name="Sessa L."/>
            <person name="Sheng Y."/>
            <person name="Shibata Y."/>
            <person name="Shimada H."/>
            <person name="Shimada K."/>
            <person name="Silva D."/>
            <person name="Sinclair B."/>
            <person name="Sperling S."/>
            <person name="Stupka E."/>
            <person name="Sugiura K."/>
            <person name="Sultana R."/>
            <person name="Takenaka Y."/>
            <person name="Taki K."/>
            <person name="Tammoja K."/>
            <person name="Tan S.L."/>
            <person name="Tang S."/>
            <person name="Taylor M.S."/>
            <person name="Tegner J."/>
            <person name="Teichmann S.A."/>
            <person name="Ueda H.R."/>
            <person name="van Nimwegen E."/>
            <person name="Verardo R."/>
            <person name="Wei C.L."/>
            <person name="Yagi K."/>
            <person name="Yamanishi H."/>
            <person name="Zabarovsky E."/>
            <person name="Zhu S."/>
            <person name="Zimmer A."/>
            <person name="Hide W."/>
            <person name="Bult C."/>
            <person name="Grimmond S.M."/>
            <person name="Teasdale R.D."/>
            <person name="Liu E.T."/>
            <person name="Brusic V."/>
            <person name="Quackenbush J."/>
            <person name="Wahlestedt C."/>
            <person name="Mattick J.S."/>
            <person name="Hume D.A."/>
            <person name="Kai C."/>
            <person name="Sasaki D."/>
            <person name="Tomaru Y."/>
            <person name="Fukuda S."/>
            <person name="Kanamori-Katayama M."/>
            <person name="Suzuki M."/>
            <person name="Aoki J."/>
            <person name="Arakawa T."/>
            <person name="Iida J."/>
            <person name="Imamura K."/>
            <person name="Itoh M."/>
            <person name="Kato T."/>
            <person name="Kawaji H."/>
            <person name="Kawagashira N."/>
            <person name="Kawashima T."/>
            <person name="Kojima M."/>
            <person name="Kondo S."/>
            <person name="Konno H."/>
            <person name="Nakano K."/>
            <person name="Ninomiya N."/>
            <person name="Nishio T."/>
            <person name="Okada M."/>
            <person name="Plessy C."/>
            <person name="Shibata K."/>
            <person name="Shiraki T."/>
            <person name="Suzuki S."/>
            <person name="Tagami M."/>
            <person name="Waki K."/>
            <person name="Watahiki A."/>
            <person name="Okamura-Oho Y."/>
            <person name="Suzuki H."/>
            <person name="Kawai J."/>
            <person name="Hayashizaki Y."/>
        </authorList>
    </citation>
    <scope>NUCLEOTIDE SEQUENCE [LARGE SCALE MRNA]</scope>
    <source>
        <strain>C57BL/6J</strain>
    </source>
</reference>
<reference key="3">
    <citation type="journal article" date="2004" name="Genome Res.">
        <title>The status, quality, and expansion of the NIH full-length cDNA project: the Mammalian Gene Collection (MGC).</title>
        <authorList>
            <consortium name="The MGC Project Team"/>
        </authorList>
    </citation>
    <scope>NUCLEOTIDE SEQUENCE [LARGE SCALE MRNA]</scope>
    <source>
        <strain>C57BL/6J</strain>
        <strain>FVB/N-3</strain>
        <tissue>Brain</tissue>
        <tissue>Mammary gland</tissue>
    </source>
</reference>
<reference key="4">
    <citation type="journal article" date="2004" name="Cancer Immun.">
        <title>RNA interference of IL-10 in leukemic B-1 cells.</title>
        <authorList>
            <person name="McCarthy B.A."/>
            <person name="Mansour A."/>
            <person name="Lin Y.-C."/>
            <person name="Kotenko S."/>
            <person name="Raveche E."/>
        </authorList>
    </citation>
    <scope>FUNCTION</scope>
    <scope>INDUCTION</scope>
</reference>
<reference key="5">
    <citation type="journal article" date="2004" name="Mol. Cell. Proteomics">
        <title>Phosphoproteomic analysis of the developing mouse brain.</title>
        <authorList>
            <person name="Ballif B.A."/>
            <person name="Villen J."/>
            <person name="Beausoleil S.A."/>
            <person name="Schwartz D."/>
            <person name="Gygi S.P."/>
        </authorList>
    </citation>
    <scope>PHOSPHORYLATION [LARGE SCALE ANALYSIS] AT SER-114</scope>
    <scope>IDENTIFICATION BY MASS SPECTROMETRY [LARGE SCALE ANALYSIS]</scope>
    <source>
        <tissue>Embryonic brain</tissue>
    </source>
</reference>
<reference key="6">
    <citation type="journal article" date="2010" name="Cell">
        <title>A tissue-specific atlas of mouse protein phosphorylation and expression.</title>
        <authorList>
            <person name="Huttlin E.L."/>
            <person name="Jedrychowski M.P."/>
            <person name="Elias J.E."/>
            <person name="Goswami T."/>
            <person name="Rad R."/>
            <person name="Beausoleil S.A."/>
            <person name="Villen J."/>
            <person name="Haas W."/>
            <person name="Sowa M.E."/>
            <person name="Gygi S.P."/>
        </authorList>
    </citation>
    <scope>PHOSPHORYLATION [LARGE SCALE ANALYSIS] AT SER-97; SER-100; SER-103; SER-114; THR-118; SER-122 AND SER-126</scope>
    <scope>IDENTIFICATION BY MASS SPECTROMETRY [LARGE SCALE ANALYSIS]</scope>
    <source>
        <tissue>Brain</tissue>
        <tissue>Kidney</tissue>
        <tissue>Liver</tissue>
        <tissue>Spleen</tissue>
        <tissue>Testis</tissue>
    </source>
</reference>
<gene>
    <name type="primary">Bcl7c</name>
</gene>